<evidence type="ECO:0000255" key="1">
    <source>
        <dbReference type="HAMAP-Rule" id="MF_00107"/>
    </source>
</evidence>
<feature type="chain" id="PRO_1000202873" description="2-C-methyl-D-erythritol 2,4-cyclodiphosphate synthase">
    <location>
        <begin position="1"/>
        <end position="155"/>
    </location>
</feature>
<feature type="binding site" evidence="1">
    <location>
        <begin position="8"/>
        <end position="10"/>
    </location>
    <ligand>
        <name>4-CDP-2-C-methyl-D-erythritol 2-phosphate</name>
        <dbReference type="ChEBI" id="CHEBI:57919"/>
    </ligand>
</feature>
<feature type="binding site" evidence="1">
    <location>
        <position position="8"/>
    </location>
    <ligand>
        <name>a divalent metal cation</name>
        <dbReference type="ChEBI" id="CHEBI:60240"/>
    </ligand>
</feature>
<feature type="binding site" evidence="1">
    <location>
        <position position="10"/>
    </location>
    <ligand>
        <name>a divalent metal cation</name>
        <dbReference type="ChEBI" id="CHEBI:60240"/>
    </ligand>
</feature>
<feature type="binding site" evidence="1">
    <location>
        <begin position="34"/>
        <end position="35"/>
    </location>
    <ligand>
        <name>4-CDP-2-C-methyl-D-erythritol 2-phosphate</name>
        <dbReference type="ChEBI" id="CHEBI:57919"/>
    </ligand>
</feature>
<feature type="binding site" evidence="1">
    <location>
        <position position="42"/>
    </location>
    <ligand>
        <name>a divalent metal cation</name>
        <dbReference type="ChEBI" id="CHEBI:60240"/>
    </ligand>
</feature>
<feature type="binding site" evidence="1">
    <location>
        <begin position="56"/>
        <end position="58"/>
    </location>
    <ligand>
        <name>4-CDP-2-C-methyl-D-erythritol 2-phosphate</name>
        <dbReference type="ChEBI" id="CHEBI:57919"/>
    </ligand>
</feature>
<feature type="binding site" evidence="1">
    <location>
        <begin position="61"/>
        <end position="65"/>
    </location>
    <ligand>
        <name>4-CDP-2-C-methyl-D-erythritol 2-phosphate</name>
        <dbReference type="ChEBI" id="CHEBI:57919"/>
    </ligand>
</feature>
<feature type="binding site" evidence="1">
    <location>
        <begin position="100"/>
        <end position="106"/>
    </location>
    <ligand>
        <name>4-CDP-2-C-methyl-D-erythritol 2-phosphate</name>
        <dbReference type="ChEBI" id="CHEBI:57919"/>
    </ligand>
</feature>
<feature type="binding site" evidence="1">
    <location>
        <begin position="132"/>
        <end position="135"/>
    </location>
    <ligand>
        <name>4-CDP-2-C-methyl-D-erythritol 2-phosphate</name>
        <dbReference type="ChEBI" id="CHEBI:57919"/>
    </ligand>
</feature>
<feature type="binding site" evidence="1">
    <location>
        <position position="139"/>
    </location>
    <ligand>
        <name>4-CDP-2-C-methyl-D-erythritol 2-phosphate</name>
        <dbReference type="ChEBI" id="CHEBI:57919"/>
    </ligand>
</feature>
<feature type="binding site" evidence="1">
    <location>
        <position position="142"/>
    </location>
    <ligand>
        <name>4-CDP-2-C-methyl-D-erythritol 2-phosphate</name>
        <dbReference type="ChEBI" id="CHEBI:57919"/>
    </ligand>
</feature>
<feature type="site" description="Transition state stabilizer" evidence="1">
    <location>
        <position position="34"/>
    </location>
</feature>
<feature type="site" description="Transition state stabilizer" evidence="1">
    <location>
        <position position="133"/>
    </location>
</feature>
<protein>
    <recommendedName>
        <fullName evidence="1">2-C-methyl-D-erythritol 2,4-cyclodiphosphate synthase</fullName>
        <shortName evidence="1">MECDP-synthase</shortName>
        <shortName evidence="1">MECPP-synthase</shortName>
        <shortName evidence="1">MECPS</shortName>
        <ecNumber evidence="1">4.6.1.12</ecNumber>
    </recommendedName>
</protein>
<sequence length="155" mass="16862">MRIGLGYDVHKLVENRPLIIGGVTIPHDKGLLGHSDADVLVHAIMDALLGAAALGDIGKHFPDSDKNFKNISSLLLLSKVKDLINKEGYKIVNIDCTIIAQKPKMLYHIDAMKKNICKCLKLDNNMLNIKATTEEGLGFTGKEEGISANAICLLN</sequence>
<accession>C3KXW6</accession>
<organism>
    <name type="scientific">Clostridium botulinum (strain 657 / Type Ba4)</name>
    <dbReference type="NCBI Taxonomy" id="515621"/>
    <lineage>
        <taxon>Bacteria</taxon>
        <taxon>Bacillati</taxon>
        <taxon>Bacillota</taxon>
        <taxon>Clostridia</taxon>
        <taxon>Eubacteriales</taxon>
        <taxon>Clostridiaceae</taxon>
        <taxon>Clostridium</taxon>
    </lineage>
</organism>
<keyword id="KW-0414">Isoprene biosynthesis</keyword>
<keyword id="KW-0456">Lyase</keyword>
<keyword id="KW-0479">Metal-binding</keyword>
<reference key="1">
    <citation type="submission" date="2008-05" db="EMBL/GenBank/DDBJ databases">
        <title>Genome sequence of Clostridium botulinum Ba4 strain 657.</title>
        <authorList>
            <person name="Shrivastava S."/>
            <person name="Brown J.L."/>
            <person name="Bruce D."/>
            <person name="Detter C."/>
            <person name="Munk C."/>
            <person name="Smith L.A."/>
            <person name="Smith T.J."/>
            <person name="Sutton G."/>
            <person name="Brettin T.S."/>
        </authorList>
    </citation>
    <scope>NUCLEOTIDE SEQUENCE [LARGE SCALE GENOMIC DNA]</scope>
    <source>
        <strain>657 / Type Ba4</strain>
    </source>
</reference>
<gene>
    <name evidence="1" type="primary">ispF</name>
    <name type="ordered locus">CLJ_B0100</name>
</gene>
<dbReference type="EC" id="4.6.1.12" evidence="1"/>
<dbReference type="EMBL" id="CP001083">
    <property type="protein sequence ID" value="ACQ53032.1"/>
    <property type="molecule type" value="Genomic_DNA"/>
</dbReference>
<dbReference type="RefSeq" id="WP_003363200.1">
    <property type="nucleotide sequence ID" value="NC_012658.1"/>
</dbReference>
<dbReference type="SMR" id="C3KXW6"/>
<dbReference type="KEGG" id="cbi:CLJ_B0100"/>
<dbReference type="HOGENOM" id="CLU_084630_2_0_9"/>
<dbReference type="UniPathway" id="UPA00056">
    <property type="reaction ID" value="UER00095"/>
</dbReference>
<dbReference type="Proteomes" id="UP000002333">
    <property type="component" value="Chromosome"/>
</dbReference>
<dbReference type="GO" id="GO:0008685">
    <property type="term" value="F:2-C-methyl-D-erythritol 2,4-cyclodiphosphate synthase activity"/>
    <property type="evidence" value="ECO:0007669"/>
    <property type="project" value="UniProtKB-UniRule"/>
</dbReference>
<dbReference type="GO" id="GO:0046872">
    <property type="term" value="F:metal ion binding"/>
    <property type="evidence" value="ECO:0007669"/>
    <property type="project" value="UniProtKB-KW"/>
</dbReference>
<dbReference type="GO" id="GO:0019288">
    <property type="term" value="P:isopentenyl diphosphate biosynthetic process, methylerythritol 4-phosphate pathway"/>
    <property type="evidence" value="ECO:0007669"/>
    <property type="project" value="UniProtKB-UniRule"/>
</dbReference>
<dbReference type="GO" id="GO:0016114">
    <property type="term" value="P:terpenoid biosynthetic process"/>
    <property type="evidence" value="ECO:0007669"/>
    <property type="project" value="InterPro"/>
</dbReference>
<dbReference type="CDD" id="cd00554">
    <property type="entry name" value="MECDP_synthase"/>
    <property type="match status" value="1"/>
</dbReference>
<dbReference type="FunFam" id="3.30.1330.50:FF:000001">
    <property type="entry name" value="2-C-methyl-D-erythritol 2,4-cyclodiphosphate synthase"/>
    <property type="match status" value="1"/>
</dbReference>
<dbReference type="Gene3D" id="3.30.1330.50">
    <property type="entry name" value="2-C-methyl-D-erythritol 2,4-cyclodiphosphate synthase"/>
    <property type="match status" value="1"/>
</dbReference>
<dbReference type="HAMAP" id="MF_00107">
    <property type="entry name" value="IspF"/>
    <property type="match status" value="1"/>
</dbReference>
<dbReference type="InterPro" id="IPR003526">
    <property type="entry name" value="MECDP_synthase"/>
</dbReference>
<dbReference type="InterPro" id="IPR020555">
    <property type="entry name" value="MECDP_synthase_CS"/>
</dbReference>
<dbReference type="InterPro" id="IPR036571">
    <property type="entry name" value="MECDP_synthase_sf"/>
</dbReference>
<dbReference type="NCBIfam" id="TIGR00151">
    <property type="entry name" value="ispF"/>
    <property type="match status" value="1"/>
</dbReference>
<dbReference type="PANTHER" id="PTHR43181">
    <property type="entry name" value="2-C-METHYL-D-ERYTHRITOL 2,4-CYCLODIPHOSPHATE SYNTHASE, CHLOROPLASTIC"/>
    <property type="match status" value="1"/>
</dbReference>
<dbReference type="PANTHER" id="PTHR43181:SF1">
    <property type="entry name" value="2-C-METHYL-D-ERYTHRITOL 2,4-CYCLODIPHOSPHATE SYNTHASE, CHLOROPLASTIC"/>
    <property type="match status" value="1"/>
</dbReference>
<dbReference type="Pfam" id="PF02542">
    <property type="entry name" value="YgbB"/>
    <property type="match status" value="1"/>
</dbReference>
<dbReference type="SUPFAM" id="SSF69765">
    <property type="entry name" value="IpsF-like"/>
    <property type="match status" value="1"/>
</dbReference>
<dbReference type="PROSITE" id="PS01350">
    <property type="entry name" value="ISPF"/>
    <property type="match status" value="1"/>
</dbReference>
<name>ISPF_CLOB6</name>
<comment type="function">
    <text evidence="1">Involved in the biosynthesis of isopentenyl diphosphate (IPP) and dimethylallyl diphosphate (DMAPP), two major building blocks of isoprenoid compounds. Catalyzes the conversion of 4-diphosphocytidyl-2-C-methyl-D-erythritol 2-phosphate (CDP-ME2P) to 2-C-methyl-D-erythritol 2,4-cyclodiphosphate (ME-CPP) with a corresponding release of cytidine 5-monophosphate (CMP).</text>
</comment>
<comment type="catalytic activity">
    <reaction evidence="1">
        <text>4-CDP-2-C-methyl-D-erythritol 2-phosphate = 2-C-methyl-D-erythritol 2,4-cyclic diphosphate + CMP</text>
        <dbReference type="Rhea" id="RHEA:23864"/>
        <dbReference type="ChEBI" id="CHEBI:57919"/>
        <dbReference type="ChEBI" id="CHEBI:58483"/>
        <dbReference type="ChEBI" id="CHEBI:60377"/>
        <dbReference type="EC" id="4.6.1.12"/>
    </reaction>
</comment>
<comment type="cofactor">
    <cofactor evidence="1">
        <name>a divalent metal cation</name>
        <dbReference type="ChEBI" id="CHEBI:60240"/>
    </cofactor>
    <text evidence="1">Binds 1 divalent metal cation per subunit.</text>
</comment>
<comment type="pathway">
    <text evidence="1">Isoprenoid biosynthesis; isopentenyl diphosphate biosynthesis via DXP pathway; isopentenyl diphosphate from 1-deoxy-D-xylulose 5-phosphate: step 4/6.</text>
</comment>
<comment type="subunit">
    <text evidence="1">Homotrimer.</text>
</comment>
<comment type="similarity">
    <text evidence="1">Belongs to the IspF family.</text>
</comment>
<proteinExistence type="inferred from homology"/>